<organism>
    <name type="scientific">Petunia hybrida</name>
    <name type="common">Petunia</name>
    <dbReference type="NCBI Taxonomy" id="4102"/>
    <lineage>
        <taxon>Eukaryota</taxon>
        <taxon>Viridiplantae</taxon>
        <taxon>Streptophyta</taxon>
        <taxon>Embryophyta</taxon>
        <taxon>Tracheophyta</taxon>
        <taxon>Spermatophyta</taxon>
        <taxon>Magnoliopsida</taxon>
        <taxon>eudicotyledons</taxon>
        <taxon>Gunneridae</taxon>
        <taxon>Pentapetalae</taxon>
        <taxon>asterids</taxon>
        <taxon>lamiids</taxon>
        <taxon>Solanales</taxon>
        <taxon>Solanaceae</taxon>
        <taxon>Petunioideae</taxon>
        <taxon>Petunia</taxon>
    </lineage>
</organism>
<gene>
    <name type="primary">RPS19</name>
</gene>
<proteinExistence type="evidence at transcript level"/>
<evidence type="ECO:0000269" key="1">
    <source>
    </source>
</evidence>
<evidence type="ECO:0000305" key="2"/>
<geneLocation type="mitochondrion"/>
<name>RT19_PETHY</name>
<reference key="1">
    <citation type="journal article" date="1991" name="Nucleic Acids Res.">
        <title>Ribosomal protein S19 is encoded by the mitochondrial genome in Petunia hybrida.</title>
        <authorList>
            <person name="Conklin P.L."/>
            <person name="Hanson M.R."/>
        </authorList>
    </citation>
    <scope>NUCLEOTIDE SEQUENCE [GENOMIC DNA]</scope>
    <scope>RNA EDITING</scope>
</reference>
<comment type="subcellular location">
    <subcellularLocation>
        <location>Mitochondrion</location>
    </subcellularLocation>
</comment>
<comment type="RNA editing">
    <location>
        <position position="39" evidence="1"/>
    </location>
    <location>
        <position position="46" evidence="1"/>
    </location>
    <location>
        <position position="55" evidence="1"/>
    </location>
    <location>
        <position position="74" evidence="1"/>
    </location>
</comment>
<comment type="similarity">
    <text evidence="2">Belongs to the universal ribosomal protein uS19 family.</text>
</comment>
<feature type="chain" id="PRO_0000130020" description="Small ribosomal subunit protein uS19m">
    <location>
        <begin position="1"/>
        <end position="94"/>
    </location>
</feature>
<accession>P27527</accession>
<keyword id="KW-0496">Mitochondrion</keyword>
<keyword id="KW-0687">Ribonucleoprotein</keyword>
<keyword id="KW-0689">Ribosomal protein</keyword>
<keyword id="KW-0691">RNA editing</keyword>
<sequence>MPRRSIWKGSFVDAFLLRMKKKRDLLFNRKIWSRRSSILPEFVDCFVRIYNGKTFVRCKITEGKVGHKFGEFAFTRKRRPSRTNIGPGRKRGKK</sequence>
<protein>
    <recommendedName>
        <fullName evidence="2">Small ribosomal subunit protein uS19m</fullName>
    </recommendedName>
    <alternativeName>
        <fullName>Ribosomal protein S19, mitochondrial</fullName>
    </alternativeName>
</protein>
<dbReference type="EMBL" id="X67028">
    <property type="protein sequence ID" value="CAA47421.1"/>
    <property type="status" value="ALT_SEQ"/>
    <property type="molecule type" value="Genomic_DNA"/>
</dbReference>
<dbReference type="EMBL" id="X67027">
    <property type="protein sequence ID" value="CAA47418.1"/>
    <property type="status" value="ALT_SEQ"/>
    <property type="molecule type" value="Genomic_DNA"/>
</dbReference>
<dbReference type="EMBL" id="X57283">
    <property type="protein sequence ID" value="CAA40551.1"/>
    <property type="status" value="ALT_SEQ"/>
    <property type="molecule type" value="Genomic_DNA"/>
</dbReference>
<dbReference type="PIR" id="S29745">
    <property type="entry name" value="R3PJ19"/>
</dbReference>
<dbReference type="PIR" id="S43027">
    <property type="entry name" value="S43027"/>
</dbReference>
<dbReference type="SMR" id="P27527"/>
<dbReference type="GO" id="GO:0005763">
    <property type="term" value="C:mitochondrial small ribosomal subunit"/>
    <property type="evidence" value="ECO:0007669"/>
    <property type="project" value="TreeGrafter"/>
</dbReference>
<dbReference type="GO" id="GO:0003723">
    <property type="term" value="F:RNA binding"/>
    <property type="evidence" value="ECO:0007669"/>
    <property type="project" value="InterPro"/>
</dbReference>
<dbReference type="GO" id="GO:0003735">
    <property type="term" value="F:structural constituent of ribosome"/>
    <property type="evidence" value="ECO:0007669"/>
    <property type="project" value="InterPro"/>
</dbReference>
<dbReference type="GO" id="GO:0000028">
    <property type="term" value="P:ribosomal small subunit assembly"/>
    <property type="evidence" value="ECO:0007669"/>
    <property type="project" value="TreeGrafter"/>
</dbReference>
<dbReference type="GO" id="GO:0006412">
    <property type="term" value="P:translation"/>
    <property type="evidence" value="ECO:0007669"/>
    <property type="project" value="InterPro"/>
</dbReference>
<dbReference type="FunFam" id="3.30.860.10:FF:000003">
    <property type="entry name" value="Ribosomal protein S19, mitochondrial"/>
    <property type="match status" value="1"/>
</dbReference>
<dbReference type="Gene3D" id="3.30.860.10">
    <property type="entry name" value="30s Ribosomal Protein S19, Chain A"/>
    <property type="match status" value="1"/>
</dbReference>
<dbReference type="HAMAP" id="MF_00531">
    <property type="entry name" value="Ribosomal_uS19"/>
    <property type="match status" value="1"/>
</dbReference>
<dbReference type="InterPro" id="IPR002222">
    <property type="entry name" value="Ribosomal_uS19"/>
</dbReference>
<dbReference type="InterPro" id="IPR005732">
    <property type="entry name" value="Ribosomal_uS19_bac-type"/>
</dbReference>
<dbReference type="InterPro" id="IPR020934">
    <property type="entry name" value="Ribosomal_uS19_CS"/>
</dbReference>
<dbReference type="InterPro" id="IPR023575">
    <property type="entry name" value="Ribosomal_uS19_SF"/>
</dbReference>
<dbReference type="NCBIfam" id="TIGR01050">
    <property type="entry name" value="rpsS_bact"/>
    <property type="match status" value="1"/>
</dbReference>
<dbReference type="PANTHER" id="PTHR11880">
    <property type="entry name" value="RIBOSOMAL PROTEIN S19P FAMILY MEMBER"/>
    <property type="match status" value="1"/>
</dbReference>
<dbReference type="PANTHER" id="PTHR11880:SF67">
    <property type="entry name" value="SMALL RIBOSOMAL SUBUNIT PROTEIN US19M"/>
    <property type="match status" value="1"/>
</dbReference>
<dbReference type="Pfam" id="PF00203">
    <property type="entry name" value="Ribosomal_S19"/>
    <property type="match status" value="1"/>
</dbReference>
<dbReference type="PIRSF" id="PIRSF002144">
    <property type="entry name" value="Ribosomal_S19"/>
    <property type="match status" value="1"/>
</dbReference>
<dbReference type="PRINTS" id="PR00975">
    <property type="entry name" value="RIBOSOMALS19"/>
</dbReference>
<dbReference type="SUPFAM" id="SSF54570">
    <property type="entry name" value="Ribosomal protein S19"/>
    <property type="match status" value="1"/>
</dbReference>
<dbReference type="PROSITE" id="PS00323">
    <property type="entry name" value="RIBOSOMAL_S19"/>
    <property type="match status" value="1"/>
</dbReference>